<sequence length="507" mass="58026">MMLGGGGGCGAGGTWLGFLVFLAVSLRNHSTCEDIDAEDRLMVDLFRGYNSLVQPVRNRSELPMIVKIGMQLVLLINVDEKEQVMHTNVWLTMKWDDFQLKWDPRDYANITQIRVAPEKVWLPDIVLFNNADGNYEVSFMCNVLILSTGTVLWVPPAIYKSSCIIDVEFFPFDDQLCSLTFGSWTYNRDEIKLDFLTSDRVDFSEYSTSSIWDMMDGPAVLTSDRSRIEFQIRIRRKTLFYTVVLILPTVLMAFLNVTVFYLPTASGEKMGLTMNVLLSIVVFLLLVSKILPPTSSSIPLVAKYLLLTFVLNIITIMVTTIICNIYFRSPITHRLPPWVRKVFLDILPLLMCMQRPHRKNVIQRSHRRLLETGPSVEENPMRSGEHHPLCRHTHNQDSCRRVRIQSDELDDELSPEAQRAIDAIEFITENRRDEEITKQFRDDWKFIASVVDRFLLYGFFGATVGGTIGIIFTAPSVFETFDENATLVKLKQLYDMGLANDTVLGIF</sequence>
<keyword id="KW-1003">Cell membrane</keyword>
<keyword id="KW-1015">Disulfide bond</keyword>
<keyword id="KW-0325">Glycoprotein</keyword>
<keyword id="KW-0407">Ion channel</keyword>
<keyword id="KW-0406">Ion transport</keyword>
<keyword id="KW-1071">Ligand-gated ion channel</keyword>
<keyword id="KW-0472">Membrane</keyword>
<keyword id="KW-0628">Postsynaptic cell membrane</keyword>
<keyword id="KW-0675">Receptor</keyword>
<keyword id="KW-1185">Reference proteome</keyword>
<keyword id="KW-0732">Signal</keyword>
<keyword id="KW-0770">Synapse</keyword>
<keyword id="KW-0812">Transmembrane</keyword>
<keyword id="KW-1133">Transmembrane helix</keyword>
<keyword id="KW-0813">Transport</keyword>
<proteinExistence type="evidence at protein level"/>
<reference key="1">
    <citation type="journal article" date="1997" name="J. Neurosci.">
        <title>Caenorhabditis elegans levamisole resistance genes lev-1, unc-29, and unc-38 encode functional nicotinic acetylcholine receptor subunits.</title>
        <authorList>
            <person name="Fleming J.T."/>
            <person name="Squire M.D."/>
            <person name="Barnes T.M."/>
            <person name="Tornoe C."/>
            <person name="Matsuda K."/>
            <person name="Ahnn J."/>
            <person name="Fire A."/>
            <person name="Sulston J.E."/>
            <person name="Barnard E.A."/>
            <person name="Sattelle D.B."/>
            <person name="Lewis J.A."/>
        </authorList>
    </citation>
    <scope>NUCLEOTIDE SEQUENCE [GENOMIC DNA / MRNA]</scope>
    <source>
        <strain>Bristol N2</strain>
    </source>
</reference>
<reference key="2">
    <citation type="journal article" date="1998" name="Science">
        <title>Genome sequence of the nematode C. elegans: a platform for investigating biology.</title>
        <authorList>
            <consortium name="The C. elegans sequencing consortium"/>
        </authorList>
    </citation>
    <scope>NUCLEOTIDE SEQUENCE [LARGE SCALE GENOMIC DNA]</scope>
    <source>
        <strain>Bristol N2</strain>
    </source>
</reference>
<reference key="3">
    <citation type="journal article" date="2005" name="EMBO J.">
        <title>Identification and characterization of novel nicotinic receptor-associated proteins in Caenorhabditis elegans.</title>
        <authorList>
            <person name="Gottschalk A."/>
            <person name="Almedom R.B."/>
            <person name="Schedletzky T."/>
            <person name="Anderson S.D."/>
            <person name="Yates J.R. III"/>
            <person name="Schafer W.R."/>
        </authorList>
    </citation>
    <scope>FUNCTION</scope>
    <scope>INTERACTION WITH UNC-29</scope>
    <scope>SUBCELLULAR LOCATION</scope>
    <scope>DISRUPTION PHENOTYPE</scope>
</reference>
<reference key="4">
    <citation type="journal article" date="2007" name="Mol. Cell. Proteomics">
        <title>Proteomics reveals N-linked glycoprotein diversity in Caenorhabditis elegans and suggests an atypical translocation mechanism for integral membrane proteins.</title>
        <authorList>
            <person name="Kaji H."/>
            <person name="Kamiie J."/>
            <person name="Kawakami H."/>
            <person name="Kido K."/>
            <person name="Yamauchi Y."/>
            <person name="Shinkawa T."/>
            <person name="Taoka M."/>
            <person name="Takahashi N."/>
            <person name="Isobe T."/>
        </authorList>
    </citation>
    <scope>GLYCOSYLATION [LARGE SCALE ANALYSIS] AT ASN-109</scope>
    <scope>IDENTIFICATION BY MASS SPECTROMETRY</scope>
    <source>
        <strain>Bristol N2</strain>
    </source>
</reference>
<organism>
    <name type="scientific">Caenorhabditis elegans</name>
    <dbReference type="NCBI Taxonomy" id="6239"/>
    <lineage>
        <taxon>Eukaryota</taxon>
        <taxon>Metazoa</taxon>
        <taxon>Ecdysozoa</taxon>
        <taxon>Nematoda</taxon>
        <taxon>Chromadorea</taxon>
        <taxon>Rhabditida</taxon>
        <taxon>Rhabditina</taxon>
        <taxon>Rhabditomorpha</taxon>
        <taxon>Rhabditoidea</taxon>
        <taxon>Rhabditidae</taxon>
        <taxon>Peloderinae</taxon>
        <taxon>Caenorhabditis</taxon>
    </lineage>
</organism>
<dbReference type="EMBL" id="X98601">
    <property type="protein sequence ID" value="CAA67198.1"/>
    <property type="molecule type" value="mRNA"/>
</dbReference>
<dbReference type="EMBL" id="X98246">
    <property type="protein sequence ID" value="CAA66902.1"/>
    <property type="molecule type" value="Genomic_DNA"/>
</dbReference>
<dbReference type="EMBL" id="Z81093">
    <property type="protein sequence ID" value="CAB03148.2"/>
    <property type="molecule type" value="Genomic_DNA"/>
</dbReference>
<dbReference type="PIR" id="T22910">
    <property type="entry name" value="T22910"/>
</dbReference>
<dbReference type="RefSeq" id="NP_001255705.1">
    <property type="nucleotide sequence ID" value="NM_001268776.3"/>
</dbReference>
<dbReference type="SMR" id="Q27218"/>
<dbReference type="BioGRID" id="43360">
    <property type="interactions" value="2"/>
</dbReference>
<dbReference type="FunCoup" id="Q27218">
    <property type="interactions" value="8"/>
</dbReference>
<dbReference type="IntAct" id="Q27218">
    <property type="interactions" value="3"/>
</dbReference>
<dbReference type="MINT" id="Q27218"/>
<dbReference type="STRING" id="6239.F09E8.7a.1"/>
<dbReference type="DrugBank" id="DB00848">
    <property type="generic name" value="Levamisole"/>
</dbReference>
<dbReference type="GlyCosmos" id="Q27218">
    <property type="glycosylation" value="3 sites, No reported glycans"/>
</dbReference>
<dbReference type="iPTMnet" id="Q27218"/>
<dbReference type="PaxDb" id="6239-F09E8.7a"/>
<dbReference type="EnsemblMetazoa" id="F09E8.7a.1">
    <property type="protein sequence ID" value="F09E8.7a.1"/>
    <property type="gene ID" value="WBGene00002974"/>
</dbReference>
<dbReference type="GeneID" id="178269"/>
<dbReference type="KEGG" id="cel:CELE_F09E8.7"/>
<dbReference type="UCSC" id="F09E8.7">
    <property type="organism name" value="c. elegans"/>
</dbReference>
<dbReference type="AGR" id="WB:WBGene00002974"/>
<dbReference type="CTD" id="178269"/>
<dbReference type="WormBase" id="F09E8.7a">
    <property type="protein sequence ID" value="CE24888"/>
    <property type="gene ID" value="WBGene00002974"/>
    <property type="gene designation" value="lev-1"/>
</dbReference>
<dbReference type="eggNOG" id="KOG3645">
    <property type="taxonomic scope" value="Eukaryota"/>
</dbReference>
<dbReference type="InParanoid" id="Q27218"/>
<dbReference type="OMA" id="MTINIHY"/>
<dbReference type="OrthoDB" id="5975154at2759"/>
<dbReference type="PhylomeDB" id="Q27218"/>
<dbReference type="Reactome" id="R-CEL-629587">
    <property type="pathway name" value="Highly sodium permeable postsynaptic acetylcholine nicotinic receptors"/>
</dbReference>
<dbReference type="Reactome" id="R-CEL-629594">
    <property type="pathway name" value="Highly calcium permeable postsynaptic nicotinic acetylcholine receptors"/>
</dbReference>
<dbReference type="Reactome" id="R-CEL-629597">
    <property type="pathway name" value="Highly calcium permeable nicotinic acetylcholine receptors"/>
</dbReference>
<dbReference type="Reactome" id="R-CEL-6798695">
    <property type="pathway name" value="Neutrophil degranulation"/>
</dbReference>
<dbReference type="PRO" id="PR:Q27218"/>
<dbReference type="Proteomes" id="UP000001940">
    <property type="component" value="Chromosome IV"/>
</dbReference>
<dbReference type="Bgee" id="WBGene00002974">
    <property type="expression patterns" value="Expressed in larva and 3 other cell types or tissues"/>
</dbReference>
<dbReference type="ExpressionAtlas" id="Q27218">
    <property type="expression patterns" value="baseline and differential"/>
</dbReference>
<dbReference type="GO" id="GO:0005892">
    <property type="term" value="C:acetylcholine-gated channel complex"/>
    <property type="evidence" value="ECO:0000318"/>
    <property type="project" value="GO_Central"/>
</dbReference>
<dbReference type="GO" id="GO:0043005">
    <property type="term" value="C:neuron projection"/>
    <property type="evidence" value="ECO:0000314"/>
    <property type="project" value="WormBase"/>
</dbReference>
<dbReference type="GO" id="GO:0043025">
    <property type="term" value="C:neuronal cell body"/>
    <property type="evidence" value="ECO:0000314"/>
    <property type="project" value="WormBase"/>
</dbReference>
<dbReference type="GO" id="GO:0005886">
    <property type="term" value="C:plasma membrane"/>
    <property type="evidence" value="ECO:0000318"/>
    <property type="project" value="GO_Central"/>
</dbReference>
<dbReference type="GO" id="GO:0045211">
    <property type="term" value="C:postsynaptic membrane"/>
    <property type="evidence" value="ECO:0000314"/>
    <property type="project" value="WormBase"/>
</dbReference>
<dbReference type="GO" id="GO:0045202">
    <property type="term" value="C:synapse"/>
    <property type="evidence" value="ECO:0000318"/>
    <property type="project" value="GO_Central"/>
</dbReference>
<dbReference type="GO" id="GO:0022848">
    <property type="term" value="F:acetylcholine-gated monoatomic cation-selective channel activity"/>
    <property type="evidence" value="ECO:0000315"/>
    <property type="project" value="WormBase"/>
</dbReference>
<dbReference type="GO" id="GO:0005231">
    <property type="term" value="F:excitatory extracellular ligand-gated monoatomic ion channel activity"/>
    <property type="evidence" value="ECO:0000318"/>
    <property type="project" value="GO_Central"/>
</dbReference>
<dbReference type="GO" id="GO:0004888">
    <property type="term" value="F:transmembrane signaling receptor activity"/>
    <property type="evidence" value="ECO:0007669"/>
    <property type="project" value="InterPro"/>
</dbReference>
<dbReference type="GO" id="GO:1904315">
    <property type="term" value="F:transmitter-gated monoatomic ion channel activity involved in regulation of postsynaptic membrane potential"/>
    <property type="evidence" value="ECO:0000318"/>
    <property type="project" value="GO_Central"/>
</dbReference>
<dbReference type="GO" id="GO:0007268">
    <property type="term" value="P:chemical synaptic transmission"/>
    <property type="evidence" value="ECO:0000318"/>
    <property type="project" value="GO_Central"/>
</dbReference>
<dbReference type="GO" id="GO:0098662">
    <property type="term" value="P:inorganic cation transmembrane transport"/>
    <property type="evidence" value="ECO:0000315"/>
    <property type="project" value="WormBase"/>
</dbReference>
<dbReference type="GO" id="GO:0034220">
    <property type="term" value="P:monoatomic ion transmembrane transport"/>
    <property type="evidence" value="ECO:0000318"/>
    <property type="project" value="GO_Central"/>
</dbReference>
<dbReference type="GO" id="GO:0046662">
    <property type="term" value="P:regulation of egg-laying behavior"/>
    <property type="evidence" value="ECO:0000315"/>
    <property type="project" value="WormBase"/>
</dbReference>
<dbReference type="GO" id="GO:0040012">
    <property type="term" value="P:regulation of locomotion"/>
    <property type="evidence" value="ECO:0000315"/>
    <property type="project" value="WormBase"/>
</dbReference>
<dbReference type="GO" id="GO:0042391">
    <property type="term" value="P:regulation of membrane potential"/>
    <property type="evidence" value="ECO:0000318"/>
    <property type="project" value="GO_Central"/>
</dbReference>
<dbReference type="CDD" id="cd19032">
    <property type="entry name" value="LGIC_ECD_nAChR_proto_beta-like"/>
    <property type="match status" value="1"/>
</dbReference>
<dbReference type="CDD" id="cd19064">
    <property type="entry name" value="LGIC_TM_nAChR"/>
    <property type="match status" value="1"/>
</dbReference>
<dbReference type="FunFam" id="1.20.58.390:FF:000035">
    <property type="entry name" value="Acetylcholine receptor subunit beta-like 1"/>
    <property type="match status" value="1"/>
</dbReference>
<dbReference type="FunFam" id="1.20.58.390:FF:000038">
    <property type="entry name" value="Acetylcholine receptor subunit beta-like 1"/>
    <property type="match status" value="1"/>
</dbReference>
<dbReference type="FunFam" id="2.70.170.10:FF:000023">
    <property type="entry name" value="Acetylcholine receptor subunit beta-like 1"/>
    <property type="match status" value="1"/>
</dbReference>
<dbReference type="Gene3D" id="2.70.170.10">
    <property type="entry name" value="Neurotransmitter-gated ion-channel ligand-binding domain"/>
    <property type="match status" value="1"/>
</dbReference>
<dbReference type="Gene3D" id="1.20.58.390">
    <property type="entry name" value="Neurotransmitter-gated ion-channel transmembrane domain"/>
    <property type="match status" value="2"/>
</dbReference>
<dbReference type="InterPro" id="IPR006202">
    <property type="entry name" value="Neur_chan_lig-bd"/>
</dbReference>
<dbReference type="InterPro" id="IPR036734">
    <property type="entry name" value="Neur_chan_lig-bd_sf"/>
</dbReference>
<dbReference type="InterPro" id="IPR006201">
    <property type="entry name" value="Neur_channel"/>
</dbReference>
<dbReference type="InterPro" id="IPR036719">
    <property type="entry name" value="Neuro-gated_channel_TM_sf"/>
</dbReference>
<dbReference type="InterPro" id="IPR038050">
    <property type="entry name" value="Neuro_actylchol_rec"/>
</dbReference>
<dbReference type="InterPro" id="IPR006029">
    <property type="entry name" value="Neurotrans-gated_channel_TM"/>
</dbReference>
<dbReference type="InterPro" id="IPR018000">
    <property type="entry name" value="Neurotransmitter_ion_chnl_CS"/>
</dbReference>
<dbReference type="InterPro" id="IPR002394">
    <property type="entry name" value="Nicotinic_acetylcholine_rcpt"/>
</dbReference>
<dbReference type="NCBIfam" id="TIGR00860">
    <property type="entry name" value="LIC"/>
    <property type="match status" value="1"/>
</dbReference>
<dbReference type="PANTHER" id="PTHR18945">
    <property type="entry name" value="NEUROTRANSMITTER GATED ION CHANNEL"/>
    <property type="match status" value="1"/>
</dbReference>
<dbReference type="Pfam" id="PF02931">
    <property type="entry name" value="Neur_chan_LBD"/>
    <property type="match status" value="1"/>
</dbReference>
<dbReference type="Pfam" id="PF02932">
    <property type="entry name" value="Neur_chan_memb"/>
    <property type="match status" value="1"/>
</dbReference>
<dbReference type="PRINTS" id="PR00254">
    <property type="entry name" value="NICOTINICR"/>
</dbReference>
<dbReference type="PRINTS" id="PR00252">
    <property type="entry name" value="NRIONCHANNEL"/>
</dbReference>
<dbReference type="SUPFAM" id="SSF90112">
    <property type="entry name" value="Neurotransmitter-gated ion-channel transmembrane pore"/>
    <property type="match status" value="1"/>
</dbReference>
<dbReference type="SUPFAM" id="SSF63712">
    <property type="entry name" value="Nicotinic receptor ligand binding domain-like"/>
    <property type="match status" value="1"/>
</dbReference>
<dbReference type="PROSITE" id="PS00236">
    <property type="entry name" value="NEUROTR_ION_CHANNEL"/>
    <property type="match status" value="1"/>
</dbReference>
<gene>
    <name type="primary">lev-1</name>
    <name type="ORF">F09E8.7</name>
</gene>
<evidence type="ECO:0000250" key="1"/>
<evidence type="ECO:0000255" key="2"/>
<evidence type="ECO:0000256" key="3">
    <source>
        <dbReference type="SAM" id="MobiDB-lite"/>
    </source>
</evidence>
<evidence type="ECO:0000269" key="4">
    <source>
    </source>
</evidence>
<evidence type="ECO:0000269" key="5">
    <source>
    </source>
</evidence>
<evidence type="ECO:0000305" key="6"/>
<comment type="function">
    <text evidence="4">Non-alpha subunit of nicotinic acetylcholine receptor (nAChR). Involved in nAChR sensitivity to nicotine.</text>
</comment>
<comment type="subunit">
    <text evidence="4">Interacts with unc-29. Component of nicotinic acetylcholine receptor composed of 2 non-alpha subunits lev-1 and unc-29, and 3 alpha subunits unc-38, unc-63 and lev-8.</text>
</comment>
<comment type="subcellular location">
    <subcellularLocation>
        <location evidence="4">Postsynaptic cell membrane</location>
        <topology evidence="2">Multi-pass membrane protein</topology>
    </subcellularLocation>
    <subcellularLocation>
        <location evidence="4">Cell membrane</location>
        <topology evidence="2">Multi-pass membrane protein</topology>
    </subcellularLocation>
    <text evidence="4">Co-localizes with unc-29 and unc-38 at nerve cord synapses.</text>
</comment>
<comment type="disruption phenotype">
    <text evidence="4">RNAi-mediated knockdown causes a resistance to nicotine-mediated paralysis.</text>
</comment>
<comment type="similarity">
    <text evidence="6">Belongs to the ligand-gated ion channel (TC 1.A.9) family. Acetylcholine receptor (TC 1.A.9.1) subfamily.</text>
</comment>
<protein>
    <recommendedName>
        <fullName>Acetylcholine receptor subunit beta-type lev-1</fullName>
    </recommendedName>
    <alternativeName>
        <fullName>Levamisole-resistant protein 1</fullName>
    </alternativeName>
</protein>
<name>ACH7_CAEEL</name>
<feature type="signal peptide" evidence="2">
    <location>
        <begin position="1"/>
        <end position="31"/>
    </location>
</feature>
<feature type="chain" id="PRO_0000000403" description="Acetylcholine receptor subunit beta-type lev-1">
    <location>
        <begin position="32"/>
        <end position="507"/>
    </location>
</feature>
<feature type="topological domain" description="Extracellular" evidence="2">
    <location>
        <begin position="32"/>
        <end position="138"/>
    </location>
</feature>
<feature type="transmembrane region" description="Helical" evidence="2">
    <location>
        <begin position="139"/>
        <end position="159"/>
    </location>
</feature>
<feature type="transmembrane region" description="Helical" evidence="2">
    <location>
        <begin position="243"/>
        <end position="263"/>
    </location>
</feature>
<feature type="transmembrane region" description="Helical" evidence="2">
    <location>
        <begin position="271"/>
        <end position="291"/>
    </location>
</feature>
<feature type="transmembrane region" description="Helical" evidence="2">
    <location>
        <begin position="305"/>
        <end position="325"/>
    </location>
</feature>
<feature type="transmembrane region" description="Helical" evidence="2">
    <location>
        <begin position="454"/>
        <end position="474"/>
    </location>
</feature>
<feature type="region of interest" description="Disordered" evidence="3">
    <location>
        <begin position="373"/>
        <end position="392"/>
    </location>
</feature>
<feature type="compositionally biased region" description="Basic and acidic residues" evidence="3">
    <location>
        <begin position="379"/>
        <end position="392"/>
    </location>
</feature>
<feature type="glycosylation site" description="N-linked (GlcNAc...) asparagine" evidence="2">
    <location>
        <position position="28"/>
    </location>
</feature>
<feature type="glycosylation site" description="N-linked (GlcNAc...) asparagine" evidence="2">
    <location>
        <position position="58"/>
    </location>
</feature>
<feature type="glycosylation site" description="N-linked (GlcNAc...) asparagine" evidence="5">
    <location>
        <position position="109"/>
    </location>
</feature>
<feature type="disulfide bond" evidence="1">
    <location>
        <begin position="163"/>
        <end position="177"/>
    </location>
</feature>
<accession>Q27218</accession>
<accession>O02278</accession>
<accession>Q19273</accession>